<reference key="1">
    <citation type="journal article" date="2002" name="Nature">
        <title>Comparison of the genomes of two Xanthomonas pathogens with differing host specificities.</title>
        <authorList>
            <person name="da Silva A.C.R."/>
            <person name="Ferro J.A."/>
            <person name="Reinach F.C."/>
            <person name="Farah C.S."/>
            <person name="Furlan L.R."/>
            <person name="Quaggio R.B."/>
            <person name="Monteiro-Vitorello C.B."/>
            <person name="Van Sluys M.A."/>
            <person name="Almeida N.F. Jr."/>
            <person name="Alves L.M.C."/>
            <person name="do Amaral A.M."/>
            <person name="Bertolini M.C."/>
            <person name="Camargo L.E.A."/>
            <person name="Camarotte G."/>
            <person name="Cannavan F."/>
            <person name="Cardozo J."/>
            <person name="Chambergo F."/>
            <person name="Ciapina L.P."/>
            <person name="Cicarelli R.M.B."/>
            <person name="Coutinho L.L."/>
            <person name="Cursino-Santos J.R."/>
            <person name="El-Dorry H."/>
            <person name="Faria J.B."/>
            <person name="Ferreira A.J.S."/>
            <person name="Ferreira R.C.C."/>
            <person name="Ferro M.I.T."/>
            <person name="Formighieri E.F."/>
            <person name="Franco M.C."/>
            <person name="Greggio C.C."/>
            <person name="Gruber A."/>
            <person name="Katsuyama A.M."/>
            <person name="Kishi L.T."/>
            <person name="Leite R.P."/>
            <person name="Lemos E.G.M."/>
            <person name="Lemos M.V.F."/>
            <person name="Locali E.C."/>
            <person name="Machado M.A."/>
            <person name="Madeira A.M.B.N."/>
            <person name="Martinez-Rossi N.M."/>
            <person name="Martins E.C."/>
            <person name="Meidanis J."/>
            <person name="Menck C.F.M."/>
            <person name="Miyaki C.Y."/>
            <person name="Moon D.H."/>
            <person name="Moreira L.M."/>
            <person name="Novo M.T.M."/>
            <person name="Okura V.K."/>
            <person name="Oliveira M.C."/>
            <person name="Oliveira V.R."/>
            <person name="Pereira H.A."/>
            <person name="Rossi A."/>
            <person name="Sena J.A.D."/>
            <person name="Silva C."/>
            <person name="de Souza R.F."/>
            <person name="Spinola L.A.F."/>
            <person name="Takita M.A."/>
            <person name="Tamura R.E."/>
            <person name="Teixeira E.C."/>
            <person name="Tezza R.I.D."/>
            <person name="Trindade dos Santos M."/>
            <person name="Truffi D."/>
            <person name="Tsai S.M."/>
            <person name="White F.F."/>
            <person name="Setubal J.C."/>
            <person name="Kitajima J.P."/>
        </authorList>
    </citation>
    <scope>NUCLEOTIDE SEQUENCE [LARGE SCALE GENOMIC DNA]</scope>
    <source>
        <strain>ATCC 33913 / DSM 3586 / NCPPB 528 / LMG 568 / P 25</strain>
    </source>
</reference>
<keyword id="KW-0119">Carbohydrate metabolism</keyword>
<keyword id="KW-0963">Cytoplasm</keyword>
<keyword id="KW-0378">Hydrolase</keyword>
<keyword id="KW-0460">Magnesium</keyword>
<keyword id="KW-0479">Metal-binding</keyword>
<keyword id="KW-1185">Reference proteome</keyword>
<organism>
    <name type="scientific">Xanthomonas campestris pv. campestris (strain ATCC 33913 / DSM 3586 / NCPPB 528 / LMG 568 / P 25)</name>
    <dbReference type="NCBI Taxonomy" id="190485"/>
    <lineage>
        <taxon>Bacteria</taxon>
        <taxon>Pseudomonadati</taxon>
        <taxon>Pseudomonadota</taxon>
        <taxon>Gammaproteobacteria</taxon>
        <taxon>Lysobacterales</taxon>
        <taxon>Lysobacteraceae</taxon>
        <taxon>Xanthomonas</taxon>
    </lineage>
</organism>
<sequence>MSRPSLTRFLIEEQHAGRIDPELRQLITIVSRACKRISIAVSKGALGGVLGDAGTGNVQGEAQKKLDVLSNDILLEANAWGGHLAACASEEMDHSQPVPDQYPSGDFLLLFDPLDGSSNIDVNVSVGTIFSVLRAPKGTEKPGDEHFLQPGTQQVAAGYCIYGPSTMLVLTLGHGTHAFTLEREEGSFLLTQADMRVPEDTAEFAINMSNQRHWEPAMQAYVGDLLAGKDGARGKDFNMRWIASMVADVHRILTRGGIFIYPWDKKDAAKPGKLRLMYEANPMGMLVEQAGGAATTGRERILDIQPTQLHQRVPVFLGSKNEVAEATRYHVEFDKAQG</sequence>
<feature type="chain" id="PRO_0000364751" description="Fructose-1,6-bisphosphatase class 1">
    <location>
        <begin position="1"/>
        <end position="338"/>
    </location>
</feature>
<feature type="binding site" evidence="1">
    <location>
        <position position="90"/>
    </location>
    <ligand>
        <name>Mg(2+)</name>
        <dbReference type="ChEBI" id="CHEBI:18420"/>
        <label>1</label>
    </ligand>
</feature>
<feature type="binding site" evidence="1">
    <location>
        <position position="112"/>
    </location>
    <ligand>
        <name>Mg(2+)</name>
        <dbReference type="ChEBI" id="CHEBI:18420"/>
        <label>1</label>
    </ligand>
</feature>
<feature type="binding site" evidence="1">
    <location>
        <position position="112"/>
    </location>
    <ligand>
        <name>Mg(2+)</name>
        <dbReference type="ChEBI" id="CHEBI:18420"/>
        <label>2</label>
    </ligand>
</feature>
<feature type="binding site" evidence="1">
    <location>
        <position position="114"/>
    </location>
    <ligand>
        <name>Mg(2+)</name>
        <dbReference type="ChEBI" id="CHEBI:18420"/>
        <label>1</label>
    </ligand>
</feature>
<feature type="binding site" evidence="1">
    <location>
        <begin position="115"/>
        <end position="118"/>
    </location>
    <ligand>
        <name>substrate</name>
    </ligand>
</feature>
<feature type="binding site" evidence="1">
    <location>
        <position position="115"/>
    </location>
    <ligand>
        <name>Mg(2+)</name>
        <dbReference type="ChEBI" id="CHEBI:18420"/>
        <label>2</label>
    </ligand>
</feature>
<feature type="binding site" evidence="1">
    <location>
        <position position="207"/>
    </location>
    <ligand>
        <name>substrate</name>
    </ligand>
</feature>
<feature type="binding site" evidence="1">
    <location>
        <position position="273"/>
    </location>
    <ligand>
        <name>substrate</name>
    </ligand>
</feature>
<feature type="binding site" evidence="1">
    <location>
        <position position="279"/>
    </location>
    <ligand>
        <name>Mg(2+)</name>
        <dbReference type="ChEBI" id="CHEBI:18420"/>
        <label>2</label>
    </ligand>
</feature>
<protein>
    <recommendedName>
        <fullName evidence="1">Fructose-1,6-bisphosphatase class 1</fullName>
        <shortName evidence="1">FBPase class 1</shortName>
        <ecNumber evidence="1">3.1.3.11</ecNumber>
    </recommendedName>
    <alternativeName>
        <fullName evidence="1">D-fructose-1,6-bisphosphate 1-phosphohydrolase class 1</fullName>
    </alternativeName>
</protein>
<proteinExistence type="inferred from homology"/>
<evidence type="ECO:0000255" key="1">
    <source>
        <dbReference type="HAMAP-Rule" id="MF_01855"/>
    </source>
</evidence>
<name>F16PA_XANCP</name>
<gene>
    <name evidence="1" type="primary">fbp</name>
    <name type="ordered locus">XCC0096</name>
</gene>
<dbReference type="EC" id="3.1.3.11" evidence="1"/>
<dbReference type="EMBL" id="AE008922">
    <property type="protein sequence ID" value="AAM39415.1"/>
    <property type="molecule type" value="Genomic_DNA"/>
</dbReference>
<dbReference type="RefSeq" id="NP_635491.1">
    <property type="nucleotide sequence ID" value="NC_003902.1"/>
</dbReference>
<dbReference type="RefSeq" id="WP_011035354.1">
    <property type="nucleotide sequence ID" value="NC_003902.1"/>
</dbReference>
<dbReference type="SMR" id="Q8PE85"/>
<dbReference type="STRING" id="190485.XCC0096"/>
<dbReference type="EnsemblBacteria" id="AAM39415">
    <property type="protein sequence ID" value="AAM39415"/>
    <property type="gene ID" value="XCC0096"/>
</dbReference>
<dbReference type="KEGG" id="xcc:XCC0096"/>
<dbReference type="PATRIC" id="fig|190485.4.peg.107"/>
<dbReference type="eggNOG" id="COG0158">
    <property type="taxonomic scope" value="Bacteria"/>
</dbReference>
<dbReference type="HOGENOM" id="CLU_039977_0_0_6"/>
<dbReference type="OrthoDB" id="9806756at2"/>
<dbReference type="UniPathway" id="UPA00138"/>
<dbReference type="Proteomes" id="UP000001010">
    <property type="component" value="Chromosome"/>
</dbReference>
<dbReference type="GO" id="GO:0005737">
    <property type="term" value="C:cytoplasm"/>
    <property type="evidence" value="ECO:0000318"/>
    <property type="project" value="GO_Central"/>
</dbReference>
<dbReference type="GO" id="GO:0005829">
    <property type="term" value="C:cytosol"/>
    <property type="evidence" value="ECO:0000318"/>
    <property type="project" value="GO_Central"/>
</dbReference>
<dbReference type="GO" id="GO:0042132">
    <property type="term" value="F:fructose 1,6-bisphosphate 1-phosphatase activity"/>
    <property type="evidence" value="ECO:0000318"/>
    <property type="project" value="GO_Central"/>
</dbReference>
<dbReference type="GO" id="GO:0000287">
    <property type="term" value="F:magnesium ion binding"/>
    <property type="evidence" value="ECO:0007669"/>
    <property type="project" value="UniProtKB-UniRule"/>
</dbReference>
<dbReference type="GO" id="GO:0030388">
    <property type="term" value="P:fructose 1,6-bisphosphate metabolic process"/>
    <property type="evidence" value="ECO:0000318"/>
    <property type="project" value="GO_Central"/>
</dbReference>
<dbReference type="GO" id="GO:0006002">
    <property type="term" value="P:fructose 6-phosphate metabolic process"/>
    <property type="evidence" value="ECO:0000318"/>
    <property type="project" value="GO_Central"/>
</dbReference>
<dbReference type="GO" id="GO:0006000">
    <property type="term" value="P:fructose metabolic process"/>
    <property type="evidence" value="ECO:0000318"/>
    <property type="project" value="GO_Central"/>
</dbReference>
<dbReference type="GO" id="GO:0006094">
    <property type="term" value="P:gluconeogenesis"/>
    <property type="evidence" value="ECO:0000318"/>
    <property type="project" value="GO_Central"/>
</dbReference>
<dbReference type="CDD" id="cd00354">
    <property type="entry name" value="FBPase"/>
    <property type="match status" value="1"/>
</dbReference>
<dbReference type="FunFam" id="3.30.540.10:FF:000006">
    <property type="entry name" value="Fructose-1,6-bisphosphatase class 1"/>
    <property type="match status" value="1"/>
</dbReference>
<dbReference type="FunFam" id="3.40.190.80:FF:000011">
    <property type="entry name" value="Fructose-1,6-bisphosphatase class 1"/>
    <property type="match status" value="1"/>
</dbReference>
<dbReference type="Gene3D" id="3.40.190.80">
    <property type="match status" value="1"/>
</dbReference>
<dbReference type="Gene3D" id="3.30.540.10">
    <property type="entry name" value="Fructose-1,6-Bisphosphatase, subunit A, domain 1"/>
    <property type="match status" value="1"/>
</dbReference>
<dbReference type="HAMAP" id="MF_01855">
    <property type="entry name" value="FBPase_class1"/>
    <property type="match status" value="1"/>
</dbReference>
<dbReference type="InterPro" id="IPR044015">
    <property type="entry name" value="FBPase_C_dom"/>
</dbReference>
<dbReference type="InterPro" id="IPR000146">
    <property type="entry name" value="FBPase_class-1"/>
</dbReference>
<dbReference type="InterPro" id="IPR033391">
    <property type="entry name" value="FBPase_N"/>
</dbReference>
<dbReference type="InterPro" id="IPR028343">
    <property type="entry name" value="FBPtase"/>
</dbReference>
<dbReference type="NCBIfam" id="NF006779">
    <property type="entry name" value="PRK09293.1-3"/>
    <property type="match status" value="1"/>
</dbReference>
<dbReference type="NCBIfam" id="NF006780">
    <property type="entry name" value="PRK09293.1-4"/>
    <property type="match status" value="1"/>
</dbReference>
<dbReference type="PANTHER" id="PTHR11556">
    <property type="entry name" value="FRUCTOSE-1,6-BISPHOSPHATASE-RELATED"/>
    <property type="match status" value="1"/>
</dbReference>
<dbReference type="PANTHER" id="PTHR11556:SF35">
    <property type="entry name" value="SEDOHEPTULOSE-1,7-BISPHOSPHATASE, CHLOROPLASTIC"/>
    <property type="match status" value="1"/>
</dbReference>
<dbReference type="Pfam" id="PF00316">
    <property type="entry name" value="FBPase"/>
    <property type="match status" value="1"/>
</dbReference>
<dbReference type="Pfam" id="PF18913">
    <property type="entry name" value="FBPase_C"/>
    <property type="match status" value="1"/>
</dbReference>
<dbReference type="PIRSF" id="PIRSF500210">
    <property type="entry name" value="FBPtase"/>
    <property type="match status" value="1"/>
</dbReference>
<dbReference type="PIRSF" id="PIRSF000904">
    <property type="entry name" value="FBPtase_SBPase"/>
    <property type="match status" value="1"/>
</dbReference>
<dbReference type="PRINTS" id="PR00115">
    <property type="entry name" value="F16BPHPHTASE"/>
</dbReference>
<dbReference type="SUPFAM" id="SSF56655">
    <property type="entry name" value="Carbohydrate phosphatase"/>
    <property type="match status" value="1"/>
</dbReference>
<comment type="catalytic activity">
    <reaction evidence="1">
        <text>beta-D-fructose 1,6-bisphosphate + H2O = beta-D-fructose 6-phosphate + phosphate</text>
        <dbReference type="Rhea" id="RHEA:11064"/>
        <dbReference type="ChEBI" id="CHEBI:15377"/>
        <dbReference type="ChEBI" id="CHEBI:32966"/>
        <dbReference type="ChEBI" id="CHEBI:43474"/>
        <dbReference type="ChEBI" id="CHEBI:57634"/>
        <dbReference type="EC" id="3.1.3.11"/>
    </reaction>
</comment>
<comment type="cofactor">
    <cofactor evidence="1">
        <name>Mg(2+)</name>
        <dbReference type="ChEBI" id="CHEBI:18420"/>
    </cofactor>
    <text evidence="1">Binds 2 magnesium ions per subunit.</text>
</comment>
<comment type="pathway">
    <text evidence="1">Carbohydrate biosynthesis; gluconeogenesis.</text>
</comment>
<comment type="subunit">
    <text evidence="1">Homotetramer.</text>
</comment>
<comment type="subcellular location">
    <subcellularLocation>
        <location evidence="1">Cytoplasm</location>
    </subcellularLocation>
</comment>
<comment type="similarity">
    <text evidence="1">Belongs to the FBPase class 1 family.</text>
</comment>
<accession>Q8PE85</accession>